<feature type="chain" id="PRO_0000323672" description="DNA-directed RNA polymerase subunit alpha">
    <location>
        <begin position="1"/>
        <end position="341"/>
    </location>
</feature>
<feature type="region of interest" description="Alpha N-terminal domain (alpha-NTD)" evidence="1">
    <location>
        <begin position="1"/>
        <end position="233"/>
    </location>
</feature>
<feature type="region of interest" description="Alpha C-terminal domain (alpha-CTD)" evidence="1">
    <location>
        <begin position="269"/>
        <end position="341"/>
    </location>
</feature>
<dbReference type="EC" id="2.7.7.6" evidence="1"/>
<dbReference type="EMBL" id="AM777385">
    <property type="protein sequence ID" value="CAO86007.1"/>
    <property type="molecule type" value="Genomic_DNA"/>
</dbReference>
<dbReference type="RefSeq" id="YP_001531313.1">
    <property type="nucleotide sequence ID" value="NC_009950.1"/>
</dbReference>
<dbReference type="SMR" id="A8Y9B8"/>
<dbReference type="GeneID" id="5696608"/>
<dbReference type="KEGG" id="lper:5696608"/>
<dbReference type="GO" id="GO:0009507">
    <property type="term" value="C:chloroplast"/>
    <property type="evidence" value="ECO:0007669"/>
    <property type="project" value="UniProtKB-SubCell"/>
</dbReference>
<dbReference type="GO" id="GO:0000428">
    <property type="term" value="C:DNA-directed RNA polymerase complex"/>
    <property type="evidence" value="ECO:0007669"/>
    <property type="project" value="UniProtKB-KW"/>
</dbReference>
<dbReference type="GO" id="GO:0005739">
    <property type="term" value="C:mitochondrion"/>
    <property type="evidence" value="ECO:0007669"/>
    <property type="project" value="GOC"/>
</dbReference>
<dbReference type="GO" id="GO:0003677">
    <property type="term" value="F:DNA binding"/>
    <property type="evidence" value="ECO:0007669"/>
    <property type="project" value="UniProtKB-UniRule"/>
</dbReference>
<dbReference type="GO" id="GO:0003899">
    <property type="term" value="F:DNA-directed RNA polymerase activity"/>
    <property type="evidence" value="ECO:0007669"/>
    <property type="project" value="UniProtKB-UniRule"/>
</dbReference>
<dbReference type="GO" id="GO:0046983">
    <property type="term" value="F:protein dimerization activity"/>
    <property type="evidence" value="ECO:0007669"/>
    <property type="project" value="InterPro"/>
</dbReference>
<dbReference type="GO" id="GO:0006351">
    <property type="term" value="P:DNA-templated transcription"/>
    <property type="evidence" value="ECO:0007669"/>
    <property type="project" value="UniProtKB-UniRule"/>
</dbReference>
<dbReference type="CDD" id="cd06928">
    <property type="entry name" value="RNAP_alpha_NTD"/>
    <property type="match status" value="1"/>
</dbReference>
<dbReference type="FunFam" id="1.10.150.20:FF:000021">
    <property type="entry name" value="DNA-directed RNA polymerase subunit alpha"/>
    <property type="match status" value="1"/>
</dbReference>
<dbReference type="FunFam" id="2.170.120.12:FF:000001">
    <property type="entry name" value="DNA-directed RNA polymerase subunit alpha"/>
    <property type="match status" value="1"/>
</dbReference>
<dbReference type="Gene3D" id="1.10.150.20">
    <property type="entry name" value="5' to 3' exonuclease, C-terminal subdomain"/>
    <property type="match status" value="1"/>
</dbReference>
<dbReference type="Gene3D" id="2.170.120.12">
    <property type="entry name" value="DNA-directed RNA polymerase, insert domain"/>
    <property type="match status" value="1"/>
</dbReference>
<dbReference type="Gene3D" id="3.30.1360.10">
    <property type="entry name" value="RNA polymerase, RBP11-like subunit"/>
    <property type="match status" value="1"/>
</dbReference>
<dbReference type="HAMAP" id="MF_00059">
    <property type="entry name" value="RNApol_bact_RpoA"/>
    <property type="match status" value="1"/>
</dbReference>
<dbReference type="InterPro" id="IPR011262">
    <property type="entry name" value="DNA-dir_RNA_pol_insert"/>
</dbReference>
<dbReference type="InterPro" id="IPR011263">
    <property type="entry name" value="DNA-dir_RNA_pol_RpoA/D/Rpb3"/>
</dbReference>
<dbReference type="InterPro" id="IPR011773">
    <property type="entry name" value="DNA-dir_RpoA"/>
</dbReference>
<dbReference type="InterPro" id="IPR036603">
    <property type="entry name" value="RBP11-like"/>
</dbReference>
<dbReference type="InterPro" id="IPR011260">
    <property type="entry name" value="RNAP_asu_C"/>
</dbReference>
<dbReference type="InterPro" id="IPR036643">
    <property type="entry name" value="RNApol_insert_sf"/>
</dbReference>
<dbReference type="NCBIfam" id="TIGR02027">
    <property type="entry name" value="rpoA"/>
    <property type="match status" value="1"/>
</dbReference>
<dbReference type="Pfam" id="PF01000">
    <property type="entry name" value="RNA_pol_A_bac"/>
    <property type="match status" value="1"/>
</dbReference>
<dbReference type="Pfam" id="PF03118">
    <property type="entry name" value="RNA_pol_A_CTD"/>
    <property type="match status" value="1"/>
</dbReference>
<dbReference type="Pfam" id="PF01193">
    <property type="entry name" value="RNA_pol_L"/>
    <property type="match status" value="1"/>
</dbReference>
<dbReference type="SMART" id="SM00662">
    <property type="entry name" value="RPOLD"/>
    <property type="match status" value="1"/>
</dbReference>
<dbReference type="SUPFAM" id="SSF47789">
    <property type="entry name" value="C-terminal domain of RNA polymerase alpha subunit"/>
    <property type="match status" value="1"/>
</dbReference>
<dbReference type="SUPFAM" id="SSF56553">
    <property type="entry name" value="Insert subdomain of RNA polymerase alpha subunit"/>
    <property type="match status" value="1"/>
</dbReference>
<dbReference type="SUPFAM" id="SSF55257">
    <property type="entry name" value="RBP11-like subunits of RNA polymerase"/>
    <property type="match status" value="1"/>
</dbReference>
<proteinExistence type="inferred from homology"/>
<comment type="function">
    <text evidence="1">DNA-dependent RNA polymerase catalyzes the transcription of DNA into RNA using the four ribonucleoside triphosphates as substrates.</text>
</comment>
<comment type="catalytic activity">
    <reaction evidence="1">
        <text>RNA(n) + a ribonucleoside 5'-triphosphate = RNA(n+1) + diphosphate</text>
        <dbReference type="Rhea" id="RHEA:21248"/>
        <dbReference type="Rhea" id="RHEA-COMP:14527"/>
        <dbReference type="Rhea" id="RHEA-COMP:17342"/>
        <dbReference type="ChEBI" id="CHEBI:33019"/>
        <dbReference type="ChEBI" id="CHEBI:61557"/>
        <dbReference type="ChEBI" id="CHEBI:140395"/>
        <dbReference type="EC" id="2.7.7.6"/>
    </reaction>
</comment>
<comment type="subunit">
    <text evidence="1">In plastids the minimal PEP RNA polymerase catalytic core is composed of four subunits: alpha, beta, beta', and beta''. When a (nuclear-encoded) sigma factor is associated with the core the holoenzyme is formed, which can initiate transcription.</text>
</comment>
<comment type="subcellular location">
    <subcellularLocation>
        <location>Plastid</location>
        <location>Chloroplast</location>
    </subcellularLocation>
</comment>
<comment type="domain">
    <text evidence="1">The N-terminal domain is essential for RNAP assembly and basal transcription, whereas the C-terminal domain is involved in interaction with transcriptional regulators and with upstream promoter elements.</text>
</comment>
<comment type="similarity">
    <text evidence="1">Belongs to the RNA polymerase alpha chain family.</text>
</comment>
<geneLocation type="chloroplast"/>
<gene>
    <name evidence="1" type="primary">rpoA</name>
    <name type="ordered locus">LopeCp073</name>
</gene>
<protein>
    <recommendedName>
        <fullName evidence="1">DNA-directed RNA polymerase subunit alpha</fullName>
        <shortName evidence="1">PEP</shortName>
        <ecNumber evidence="1">2.7.7.6</ecNumber>
    </recommendedName>
    <alternativeName>
        <fullName evidence="1">Plastid-encoded RNA polymerase subunit alpha</fullName>
        <shortName evidence="1">RNA polymerase subunit alpha</shortName>
    </alternativeName>
</protein>
<accession>A8Y9B8</accession>
<sequence length="341" mass="39039">MVREEVAGSTQTLQWKCVESRVDSKRLYYGRFILSPLRKGQADTVGIALRRALLGEIEGTCIARAKFGSVPHEYSTIAGIEESVQEILLNLKEIVLRSNLYGVRDASICVKGPRYITAQDIILPPSVEIVDTSQPIANLTEPIDFCIELQIKRDRGYQTELRKNYQDGSYPIDAVSMPVRNVNYSIFSCGNGNEKHEILFLEIWTNGSLTPKEALYEASRNLIDLFLPFLHAEEEGTSFEENKNRFTPPLFTFQKRLTNLNLKKNKKGIPLNCIFIDQLELPSRTYNCLKRANIHTLLDLLSKTEEDLMRIDSFHMEDGKQIWDTLEKYLPIDLLKNKLSF</sequence>
<keyword id="KW-0150">Chloroplast</keyword>
<keyword id="KW-0240">DNA-directed RNA polymerase</keyword>
<keyword id="KW-0548">Nucleotidyltransferase</keyword>
<keyword id="KW-0934">Plastid</keyword>
<keyword id="KW-0804">Transcription</keyword>
<keyword id="KW-0808">Transferase</keyword>
<organism>
    <name type="scientific">Lolium perenne</name>
    <name type="common">Perennial ryegrass</name>
    <dbReference type="NCBI Taxonomy" id="4522"/>
    <lineage>
        <taxon>Eukaryota</taxon>
        <taxon>Viridiplantae</taxon>
        <taxon>Streptophyta</taxon>
        <taxon>Embryophyta</taxon>
        <taxon>Tracheophyta</taxon>
        <taxon>Spermatophyta</taxon>
        <taxon>Magnoliopsida</taxon>
        <taxon>Liliopsida</taxon>
        <taxon>Poales</taxon>
        <taxon>Poaceae</taxon>
        <taxon>BOP clade</taxon>
        <taxon>Pooideae</taxon>
        <taxon>Poodae</taxon>
        <taxon>Poeae</taxon>
        <taxon>Poeae Chloroplast Group 2 (Poeae type)</taxon>
        <taxon>Loliodinae</taxon>
        <taxon>Loliinae</taxon>
        <taxon>Lolium</taxon>
    </lineage>
</organism>
<reference key="1">
    <citation type="journal article" date="2008" name="PLoS ONE">
        <title>An optimized chloroplast DNA extraction protocol for grasses (Poaceae) proves suitable for whole plastid genome sequencing and SNP detection.</title>
        <authorList>
            <person name="Diekmann K."/>
            <person name="Hodkinson T.R."/>
            <person name="Fricke E."/>
            <person name="Barth S."/>
        </authorList>
    </citation>
    <scope>NUCLEOTIDE SEQUENCE [LARGE SCALE GENOMIC DNA]</scope>
    <source>
        <strain>cv. Cashel</strain>
    </source>
</reference>
<evidence type="ECO:0000255" key="1">
    <source>
        <dbReference type="HAMAP-Rule" id="MF_00059"/>
    </source>
</evidence>
<name>RPOA_LOLPR</name>